<gene>
    <name evidence="1" type="primary">glmU</name>
    <name type="ordered locus">Neut_0279</name>
</gene>
<protein>
    <recommendedName>
        <fullName evidence="1">Bifunctional protein GlmU</fullName>
    </recommendedName>
    <domain>
        <recommendedName>
            <fullName evidence="1">UDP-N-acetylglucosamine pyrophosphorylase</fullName>
            <ecNumber evidence="1">2.7.7.23</ecNumber>
        </recommendedName>
        <alternativeName>
            <fullName evidence="1">N-acetylglucosamine-1-phosphate uridyltransferase</fullName>
        </alternativeName>
    </domain>
    <domain>
        <recommendedName>
            <fullName evidence="1">Glucosamine-1-phosphate N-acetyltransferase</fullName>
            <ecNumber evidence="1">2.3.1.157</ecNumber>
        </recommendedName>
    </domain>
</protein>
<reference key="1">
    <citation type="journal article" date="2007" name="Environ. Microbiol.">
        <title>Whole-genome analysis of the ammonia-oxidizing bacterium, Nitrosomonas eutropha C91: implications for niche adaptation.</title>
        <authorList>
            <person name="Stein L.Y."/>
            <person name="Arp D.J."/>
            <person name="Berube P.M."/>
            <person name="Chain P.S."/>
            <person name="Hauser L."/>
            <person name="Jetten M.S."/>
            <person name="Klotz M.G."/>
            <person name="Larimer F.W."/>
            <person name="Norton J.M."/>
            <person name="Op den Camp H.J.M."/>
            <person name="Shin M."/>
            <person name="Wei X."/>
        </authorList>
    </citation>
    <scope>NUCLEOTIDE SEQUENCE [LARGE SCALE GENOMIC DNA]</scope>
    <source>
        <strain>DSM 101675 / C91 / Nm57</strain>
    </source>
</reference>
<name>GLMU_NITEC</name>
<feature type="chain" id="PRO_1000056176" description="Bifunctional protein GlmU">
    <location>
        <begin position="1"/>
        <end position="458"/>
    </location>
</feature>
<feature type="region of interest" description="Pyrophosphorylase" evidence="1">
    <location>
        <begin position="1"/>
        <end position="230"/>
    </location>
</feature>
<feature type="region of interest" description="Linker" evidence="1">
    <location>
        <begin position="231"/>
        <end position="251"/>
    </location>
</feature>
<feature type="region of interest" description="N-acetyltransferase" evidence="1">
    <location>
        <begin position="252"/>
        <end position="458"/>
    </location>
</feature>
<feature type="active site" description="Proton acceptor" evidence="1">
    <location>
        <position position="364"/>
    </location>
</feature>
<feature type="binding site" evidence="1">
    <location>
        <begin position="9"/>
        <end position="12"/>
    </location>
    <ligand>
        <name>UDP-N-acetyl-alpha-D-glucosamine</name>
        <dbReference type="ChEBI" id="CHEBI:57705"/>
    </ligand>
</feature>
<feature type="binding site" evidence="1">
    <location>
        <position position="23"/>
    </location>
    <ligand>
        <name>UDP-N-acetyl-alpha-D-glucosamine</name>
        <dbReference type="ChEBI" id="CHEBI:57705"/>
    </ligand>
</feature>
<feature type="binding site" evidence="1">
    <location>
        <position position="75"/>
    </location>
    <ligand>
        <name>UDP-N-acetyl-alpha-D-glucosamine</name>
        <dbReference type="ChEBI" id="CHEBI:57705"/>
    </ligand>
</feature>
<feature type="binding site" evidence="1">
    <location>
        <begin position="80"/>
        <end position="81"/>
    </location>
    <ligand>
        <name>UDP-N-acetyl-alpha-D-glucosamine</name>
        <dbReference type="ChEBI" id="CHEBI:57705"/>
    </ligand>
</feature>
<feature type="binding site" evidence="1">
    <location>
        <position position="104"/>
    </location>
    <ligand>
        <name>Mg(2+)</name>
        <dbReference type="ChEBI" id="CHEBI:18420"/>
    </ligand>
</feature>
<feature type="binding site" evidence="1">
    <location>
        <position position="139"/>
    </location>
    <ligand>
        <name>UDP-N-acetyl-alpha-D-glucosamine</name>
        <dbReference type="ChEBI" id="CHEBI:57705"/>
    </ligand>
</feature>
<feature type="binding site" evidence="1">
    <location>
        <position position="155"/>
    </location>
    <ligand>
        <name>UDP-N-acetyl-alpha-D-glucosamine</name>
        <dbReference type="ChEBI" id="CHEBI:57705"/>
    </ligand>
</feature>
<feature type="binding site" evidence="1">
    <location>
        <position position="170"/>
    </location>
    <ligand>
        <name>UDP-N-acetyl-alpha-D-glucosamine</name>
        <dbReference type="ChEBI" id="CHEBI:57705"/>
    </ligand>
</feature>
<feature type="binding site" evidence="1">
    <location>
        <position position="228"/>
    </location>
    <ligand>
        <name>Mg(2+)</name>
        <dbReference type="ChEBI" id="CHEBI:18420"/>
    </ligand>
</feature>
<feature type="binding site" evidence="1">
    <location>
        <position position="228"/>
    </location>
    <ligand>
        <name>UDP-N-acetyl-alpha-D-glucosamine</name>
        <dbReference type="ChEBI" id="CHEBI:57705"/>
    </ligand>
</feature>
<feature type="binding site" evidence="1">
    <location>
        <position position="334"/>
    </location>
    <ligand>
        <name>UDP-N-acetyl-alpha-D-glucosamine</name>
        <dbReference type="ChEBI" id="CHEBI:57705"/>
    </ligand>
</feature>
<feature type="binding site" evidence="1">
    <location>
        <position position="352"/>
    </location>
    <ligand>
        <name>UDP-N-acetyl-alpha-D-glucosamine</name>
        <dbReference type="ChEBI" id="CHEBI:57705"/>
    </ligand>
</feature>
<feature type="binding site" evidence="1">
    <location>
        <position position="367"/>
    </location>
    <ligand>
        <name>UDP-N-acetyl-alpha-D-glucosamine</name>
        <dbReference type="ChEBI" id="CHEBI:57705"/>
    </ligand>
</feature>
<feature type="binding site" evidence="1">
    <location>
        <position position="378"/>
    </location>
    <ligand>
        <name>UDP-N-acetyl-alpha-D-glucosamine</name>
        <dbReference type="ChEBI" id="CHEBI:57705"/>
    </ligand>
</feature>
<feature type="binding site" evidence="1">
    <location>
        <position position="381"/>
    </location>
    <ligand>
        <name>acetyl-CoA</name>
        <dbReference type="ChEBI" id="CHEBI:57288"/>
    </ligand>
</feature>
<feature type="binding site" evidence="1">
    <location>
        <begin position="387"/>
        <end position="388"/>
    </location>
    <ligand>
        <name>acetyl-CoA</name>
        <dbReference type="ChEBI" id="CHEBI:57288"/>
    </ligand>
</feature>
<feature type="binding site" evidence="1">
    <location>
        <position position="406"/>
    </location>
    <ligand>
        <name>acetyl-CoA</name>
        <dbReference type="ChEBI" id="CHEBI:57288"/>
    </ligand>
</feature>
<feature type="binding site" evidence="1">
    <location>
        <position position="424"/>
    </location>
    <ligand>
        <name>acetyl-CoA</name>
        <dbReference type="ChEBI" id="CHEBI:57288"/>
    </ligand>
</feature>
<feature type="binding site" evidence="1">
    <location>
        <position position="441"/>
    </location>
    <ligand>
        <name>acetyl-CoA</name>
        <dbReference type="ChEBI" id="CHEBI:57288"/>
    </ligand>
</feature>
<proteinExistence type="inferred from homology"/>
<comment type="function">
    <text evidence="1">Catalyzes the last two sequential reactions in the de novo biosynthetic pathway for UDP-N-acetylglucosamine (UDP-GlcNAc). The C-terminal domain catalyzes the transfer of acetyl group from acetyl coenzyme A to glucosamine-1-phosphate (GlcN-1-P) to produce N-acetylglucosamine-1-phosphate (GlcNAc-1-P), which is converted into UDP-GlcNAc by the transfer of uridine 5-monophosphate (from uridine 5-triphosphate), a reaction catalyzed by the N-terminal domain.</text>
</comment>
<comment type="catalytic activity">
    <reaction evidence="1">
        <text>alpha-D-glucosamine 1-phosphate + acetyl-CoA = N-acetyl-alpha-D-glucosamine 1-phosphate + CoA + H(+)</text>
        <dbReference type="Rhea" id="RHEA:13725"/>
        <dbReference type="ChEBI" id="CHEBI:15378"/>
        <dbReference type="ChEBI" id="CHEBI:57287"/>
        <dbReference type="ChEBI" id="CHEBI:57288"/>
        <dbReference type="ChEBI" id="CHEBI:57776"/>
        <dbReference type="ChEBI" id="CHEBI:58516"/>
        <dbReference type="EC" id="2.3.1.157"/>
    </reaction>
</comment>
<comment type="catalytic activity">
    <reaction evidence="1">
        <text>N-acetyl-alpha-D-glucosamine 1-phosphate + UTP + H(+) = UDP-N-acetyl-alpha-D-glucosamine + diphosphate</text>
        <dbReference type="Rhea" id="RHEA:13509"/>
        <dbReference type="ChEBI" id="CHEBI:15378"/>
        <dbReference type="ChEBI" id="CHEBI:33019"/>
        <dbReference type="ChEBI" id="CHEBI:46398"/>
        <dbReference type="ChEBI" id="CHEBI:57705"/>
        <dbReference type="ChEBI" id="CHEBI:57776"/>
        <dbReference type="EC" id="2.7.7.23"/>
    </reaction>
</comment>
<comment type="cofactor">
    <cofactor evidence="1">
        <name>Mg(2+)</name>
        <dbReference type="ChEBI" id="CHEBI:18420"/>
    </cofactor>
    <text evidence="1">Binds 1 Mg(2+) ion per subunit.</text>
</comment>
<comment type="pathway">
    <text evidence="1">Nucleotide-sugar biosynthesis; UDP-N-acetyl-alpha-D-glucosamine biosynthesis; N-acetyl-alpha-D-glucosamine 1-phosphate from alpha-D-glucosamine 6-phosphate (route II): step 2/2.</text>
</comment>
<comment type="pathway">
    <text evidence="1">Nucleotide-sugar biosynthesis; UDP-N-acetyl-alpha-D-glucosamine biosynthesis; UDP-N-acetyl-alpha-D-glucosamine from N-acetyl-alpha-D-glucosamine 1-phosphate: step 1/1.</text>
</comment>
<comment type="pathway">
    <text evidence="1">Bacterial outer membrane biogenesis; LPS lipid A biosynthesis.</text>
</comment>
<comment type="subunit">
    <text evidence="1">Homotrimer.</text>
</comment>
<comment type="subcellular location">
    <subcellularLocation>
        <location evidence="1">Cytoplasm</location>
    </subcellularLocation>
</comment>
<comment type="similarity">
    <text evidence="1">In the N-terminal section; belongs to the N-acetylglucosamine-1-phosphate uridyltransferase family.</text>
</comment>
<comment type="similarity">
    <text evidence="1">In the C-terminal section; belongs to the transferase hexapeptide repeat family.</text>
</comment>
<dbReference type="EC" id="2.7.7.23" evidence="1"/>
<dbReference type="EC" id="2.3.1.157" evidence="1"/>
<dbReference type="EMBL" id="CP000450">
    <property type="protein sequence ID" value="ABI58563.1"/>
    <property type="molecule type" value="Genomic_DNA"/>
</dbReference>
<dbReference type="RefSeq" id="WP_011633407.1">
    <property type="nucleotide sequence ID" value="NC_008344.1"/>
</dbReference>
<dbReference type="SMR" id="Q0AJA8"/>
<dbReference type="STRING" id="335283.Neut_0279"/>
<dbReference type="KEGG" id="net:Neut_0279"/>
<dbReference type="eggNOG" id="COG1207">
    <property type="taxonomic scope" value="Bacteria"/>
</dbReference>
<dbReference type="HOGENOM" id="CLU_029499_15_2_4"/>
<dbReference type="UniPathway" id="UPA00113">
    <property type="reaction ID" value="UER00532"/>
</dbReference>
<dbReference type="UniPathway" id="UPA00113">
    <property type="reaction ID" value="UER00533"/>
</dbReference>
<dbReference type="UniPathway" id="UPA00973"/>
<dbReference type="Proteomes" id="UP000001966">
    <property type="component" value="Chromosome"/>
</dbReference>
<dbReference type="GO" id="GO:0005737">
    <property type="term" value="C:cytoplasm"/>
    <property type="evidence" value="ECO:0007669"/>
    <property type="project" value="UniProtKB-SubCell"/>
</dbReference>
<dbReference type="GO" id="GO:0016020">
    <property type="term" value="C:membrane"/>
    <property type="evidence" value="ECO:0007669"/>
    <property type="project" value="GOC"/>
</dbReference>
<dbReference type="GO" id="GO:0019134">
    <property type="term" value="F:glucosamine-1-phosphate N-acetyltransferase activity"/>
    <property type="evidence" value="ECO:0007669"/>
    <property type="project" value="UniProtKB-UniRule"/>
</dbReference>
<dbReference type="GO" id="GO:0000287">
    <property type="term" value="F:magnesium ion binding"/>
    <property type="evidence" value="ECO:0007669"/>
    <property type="project" value="UniProtKB-UniRule"/>
</dbReference>
<dbReference type="GO" id="GO:0003977">
    <property type="term" value="F:UDP-N-acetylglucosamine diphosphorylase activity"/>
    <property type="evidence" value="ECO:0007669"/>
    <property type="project" value="UniProtKB-UniRule"/>
</dbReference>
<dbReference type="GO" id="GO:0000902">
    <property type="term" value="P:cell morphogenesis"/>
    <property type="evidence" value="ECO:0007669"/>
    <property type="project" value="UniProtKB-UniRule"/>
</dbReference>
<dbReference type="GO" id="GO:0071555">
    <property type="term" value="P:cell wall organization"/>
    <property type="evidence" value="ECO:0007669"/>
    <property type="project" value="UniProtKB-KW"/>
</dbReference>
<dbReference type="GO" id="GO:0009245">
    <property type="term" value="P:lipid A biosynthetic process"/>
    <property type="evidence" value="ECO:0007669"/>
    <property type="project" value="UniProtKB-UniRule"/>
</dbReference>
<dbReference type="GO" id="GO:0009252">
    <property type="term" value="P:peptidoglycan biosynthetic process"/>
    <property type="evidence" value="ECO:0007669"/>
    <property type="project" value="UniProtKB-UniRule"/>
</dbReference>
<dbReference type="GO" id="GO:0008360">
    <property type="term" value="P:regulation of cell shape"/>
    <property type="evidence" value="ECO:0007669"/>
    <property type="project" value="UniProtKB-KW"/>
</dbReference>
<dbReference type="GO" id="GO:0006048">
    <property type="term" value="P:UDP-N-acetylglucosamine biosynthetic process"/>
    <property type="evidence" value="ECO:0007669"/>
    <property type="project" value="UniProtKB-UniPathway"/>
</dbReference>
<dbReference type="CDD" id="cd02540">
    <property type="entry name" value="GT2_GlmU_N_bac"/>
    <property type="match status" value="1"/>
</dbReference>
<dbReference type="CDD" id="cd03353">
    <property type="entry name" value="LbH_GlmU_C"/>
    <property type="match status" value="1"/>
</dbReference>
<dbReference type="Gene3D" id="2.160.10.10">
    <property type="entry name" value="Hexapeptide repeat proteins"/>
    <property type="match status" value="1"/>
</dbReference>
<dbReference type="Gene3D" id="3.90.550.10">
    <property type="entry name" value="Spore Coat Polysaccharide Biosynthesis Protein SpsA, Chain A"/>
    <property type="match status" value="1"/>
</dbReference>
<dbReference type="HAMAP" id="MF_01631">
    <property type="entry name" value="GlmU"/>
    <property type="match status" value="1"/>
</dbReference>
<dbReference type="InterPro" id="IPR005882">
    <property type="entry name" value="Bifunctional_GlmU"/>
</dbReference>
<dbReference type="InterPro" id="IPR050065">
    <property type="entry name" value="GlmU-like"/>
</dbReference>
<dbReference type="InterPro" id="IPR038009">
    <property type="entry name" value="GlmU_C_LbH"/>
</dbReference>
<dbReference type="InterPro" id="IPR001451">
    <property type="entry name" value="Hexapep"/>
</dbReference>
<dbReference type="InterPro" id="IPR025877">
    <property type="entry name" value="MobA-like_NTP_Trfase"/>
</dbReference>
<dbReference type="InterPro" id="IPR029044">
    <property type="entry name" value="Nucleotide-diphossugar_trans"/>
</dbReference>
<dbReference type="InterPro" id="IPR011004">
    <property type="entry name" value="Trimer_LpxA-like_sf"/>
</dbReference>
<dbReference type="NCBIfam" id="TIGR01173">
    <property type="entry name" value="glmU"/>
    <property type="match status" value="1"/>
</dbReference>
<dbReference type="PANTHER" id="PTHR43584:SF3">
    <property type="entry name" value="BIFUNCTIONAL PROTEIN GLMU"/>
    <property type="match status" value="1"/>
</dbReference>
<dbReference type="PANTHER" id="PTHR43584">
    <property type="entry name" value="NUCLEOTIDYL TRANSFERASE"/>
    <property type="match status" value="1"/>
</dbReference>
<dbReference type="Pfam" id="PF00132">
    <property type="entry name" value="Hexapep"/>
    <property type="match status" value="3"/>
</dbReference>
<dbReference type="Pfam" id="PF12804">
    <property type="entry name" value="NTP_transf_3"/>
    <property type="match status" value="1"/>
</dbReference>
<dbReference type="SUPFAM" id="SSF53448">
    <property type="entry name" value="Nucleotide-diphospho-sugar transferases"/>
    <property type="match status" value="1"/>
</dbReference>
<dbReference type="SUPFAM" id="SSF51161">
    <property type="entry name" value="Trimeric LpxA-like enzymes"/>
    <property type="match status" value="1"/>
</dbReference>
<keyword id="KW-0012">Acyltransferase</keyword>
<keyword id="KW-0133">Cell shape</keyword>
<keyword id="KW-0961">Cell wall biogenesis/degradation</keyword>
<keyword id="KW-0963">Cytoplasm</keyword>
<keyword id="KW-0460">Magnesium</keyword>
<keyword id="KW-0479">Metal-binding</keyword>
<keyword id="KW-0511">Multifunctional enzyme</keyword>
<keyword id="KW-0548">Nucleotidyltransferase</keyword>
<keyword id="KW-0573">Peptidoglycan synthesis</keyword>
<keyword id="KW-0677">Repeat</keyword>
<keyword id="KW-0808">Transferase</keyword>
<sequence>MLQIDVVILAAGMGKRMRSTLPKVLHPLAGKPILFHVLDTARILSPTKICVIYGHGGELVRQTVGNDPNLIWVKQTQQLGTGHAVKQALPCLGKNGITLVLFGDVPLVKSNTLKSLIDKACEDSLALLTVELNDPAGYGRIIRDPKTNRVQAIVEEQDALPSQKKIREINTGIMVLPNMYLESWLDRLSNANTQGEYYLTDIIAMAVNDGVQIETSSPASDWEVVGVNDKIQLSTLERAHQQDVAKGLMEQGVMFADPARFDVRGQLICGHNVEIDINCVFEGNVRLGDNVKISANCILRNVAISDGSIVHPFSMIEDTEVGKNCRVGPYARIRPGTQLDDAVHVGNFVEIKNSHIASGSKVNHLSYIGDTEMGRRVNIGAGTITCNYDGAFKHQTIIEDDVFIGSDSQLIAPITVAKGSTIGAGSTITRDTPEGQLTLSRIKQISIANWKRPKKNKD</sequence>
<evidence type="ECO:0000255" key="1">
    <source>
        <dbReference type="HAMAP-Rule" id="MF_01631"/>
    </source>
</evidence>
<organism>
    <name type="scientific">Nitrosomonas eutropha (strain DSM 101675 / C91 / Nm57)</name>
    <dbReference type="NCBI Taxonomy" id="335283"/>
    <lineage>
        <taxon>Bacteria</taxon>
        <taxon>Pseudomonadati</taxon>
        <taxon>Pseudomonadota</taxon>
        <taxon>Betaproteobacteria</taxon>
        <taxon>Nitrosomonadales</taxon>
        <taxon>Nitrosomonadaceae</taxon>
        <taxon>Nitrosomonas</taxon>
    </lineage>
</organism>
<accession>Q0AJA8</accession>